<reference key="1">
    <citation type="journal article" date="2001" name="Proc. Natl. Acad. Sci. U.S.A.">
        <title>The complete genome of the crenarchaeon Sulfolobus solfataricus P2.</title>
        <authorList>
            <person name="She Q."/>
            <person name="Singh R.K."/>
            <person name="Confalonieri F."/>
            <person name="Zivanovic Y."/>
            <person name="Allard G."/>
            <person name="Awayez M.J."/>
            <person name="Chan-Weiher C.C.-Y."/>
            <person name="Clausen I.G."/>
            <person name="Curtis B.A."/>
            <person name="De Moors A."/>
            <person name="Erauso G."/>
            <person name="Fletcher C."/>
            <person name="Gordon P.M.K."/>
            <person name="Heikamp-de Jong I."/>
            <person name="Jeffries A.C."/>
            <person name="Kozera C.J."/>
            <person name="Medina N."/>
            <person name="Peng X."/>
            <person name="Thi-Ngoc H.P."/>
            <person name="Redder P."/>
            <person name="Schenk M.E."/>
            <person name="Theriault C."/>
            <person name="Tolstrup N."/>
            <person name="Charlebois R.L."/>
            <person name="Doolittle W.F."/>
            <person name="Duguet M."/>
            <person name="Gaasterland T."/>
            <person name="Garrett R.A."/>
            <person name="Ragan M.A."/>
            <person name="Sensen C.W."/>
            <person name="Van der Oost J."/>
        </authorList>
    </citation>
    <scope>NUCLEOTIDE SEQUENCE [LARGE SCALE GENOMIC DNA]</scope>
    <source>
        <strain>ATCC 35092 / DSM 1617 / JCM 11322 / P2</strain>
    </source>
</reference>
<keyword id="KW-0031">Aminopeptidase</keyword>
<keyword id="KW-0378">Hydrolase</keyword>
<keyword id="KW-0645">Protease</keyword>
<keyword id="KW-1185">Reference proteome</keyword>
<dbReference type="EC" id="3.4.11.5"/>
<dbReference type="EMBL" id="AE006641">
    <property type="protein sequence ID" value="AAK43219.1"/>
    <property type="molecule type" value="Genomic_DNA"/>
</dbReference>
<dbReference type="PIR" id="D90495">
    <property type="entry name" value="D90495"/>
</dbReference>
<dbReference type="SMR" id="Q97UA2"/>
<dbReference type="FunCoup" id="Q97UA2">
    <property type="interactions" value="79"/>
</dbReference>
<dbReference type="STRING" id="273057.SSO3115"/>
<dbReference type="ESTHER" id="sulso-pip">
    <property type="family name" value="Proline_iminopeptidase"/>
</dbReference>
<dbReference type="MEROPS" id="S33.005"/>
<dbReference type="PaxDb" id="273057-SSO3115"/>
<dbReference type="EnsemblBacteria" id="AAK43219">
    <property type="protein sequence ID" value="AAK43219"/>
    <property type="gene ID" value="SSO3115"/>
</dbReference>
<dbReference type="KEGG" id="sso:SSO3115"/>
<dbReference type="PATRIC" id="fig|273057.12.peg.3224"/>
<dbReference type="eggNOG" id="arCOG01648">
    <property type="taxonomic scope" value="Archaea"/>
</dbReference>
<dbReference type="HOGENOM" id="CLU_020336_15_1_2"/>
<dbReference type="InParanoid" id="Q97UA2"/>
<dbReference type="PhylomeDB" id="Q97UA2"/>
<dbReference type="Proteomes" id="UP000001974">
    <property type="component" value="Chromosome"/>
</dbReference>
<dbReference type="GO" id="GO:0004177">
    <property type="term" value="F:aminopeptidase activity"/>
    <property type="evidence" value="ECO:0007669"/>
    <property type="project" value="UniProtKB-KW"/>
</dbReference>
<dbReference type="GO" id="GO:0006508">
    <property type="term" value="P:proteolysis"/>
    <property type="evidence" value="ECO:0007669"/>
    <property type="project" value="UniProtKB-KW"/>
</dbReference>
<dbReference type="Gene3D" id="3.40.50.1820">
    <property type="entry name" value="alpha/beta hydrolase"/>
    <property type="match status" value="1"/>
</dbReference>
<dbReference type="InterPro" id="IPR000073">
    <property type="entry name" value="AB_hydrolase_1"/>
</dbReference>
<dbReference type="InterPro" id="IPR029058">
    <property type="entry name" value="AB_hydrolase_fold"/>
</dbReference>
<dbReference type="InterPro" id="IPR050266">
    <property type="entry name" value="AB_hydrolase_sf"/>
</dbReference>
<dbReference type="InterPro" id="IPR002410">
    <property type="entry name" value="Peptidase_S33"/>
</dbReference>
<dbReference type="InterPro" id="IPR005945">
    <property type="entry name" value="Pro_imino_pep"/>
</dbReference>
<dbReference type="NCBIfam" id="TIGR01250">
    <property type="entry name" value="pro_imino_pep_2"/>
    <property type="match status" value="1"/>
</dbReference>
<dbReference type="NCBIfam" id="NF045948">
    <property type="entry name" value="ProImpepThrmp"/>
    <property type="match status" value="1"/>
</dbReference>
<dbReference type="PANTHER" id="PTHR43798:SF31">
    <property type="entry name" value="AB HYDROLASE SUPERFAMILY PROTEIN YCLE"/>
    <property type="match status" value="1"/>
</dbReference>
<dbReference type="PANTHER" id="PTHR43798">
    <property type="entry name" value="MONOACYLGLYCEROL LIPASE"/>
    <property type="match status" value="1"/>
</dbReference>
<dbReference type="Pfam" id="PF00561">
    <property type="entry name" value="Abhydrolase_1"/>
    <property type="match status" value="1"/>
</dbReference>
<dbReference type="PIRSF" id="PIRSF005539">
    <property type="entry name" value="Pept_S33_TRI_F1"/>
    <property type="match status" value="1"/>
</dbReference>
<dbReference type="PRINTS" id="PR00793">
    <property type="entry name" value="PROAMNOPTASE"/>
</dbReference>
<dbReference type="SUPFAM" id="SSF53474">
    <property type="entry name" value="alpha/beta-Hydrolases"/>
    <property type="match status" value="1"/>
</dbReference>
<proteinExistence type="inferred from homology"/>
<sequence length="310" mass="35961">MSYYFITMKGYSINVEEGYKRIFGINIYYKLYRVKGSNRNLVTLHGGPGGSHDYLIPLADLSNYGINVLFYDQFGCGRSDDPKDTSDYTIDHGLEELEELRKQVFGNDKIVLLGHSYGGALAIAYALKYQQFLRGLIVSSGLSSVPYTVKEMRRLIEELPDKYKTIIKRYESLGDFKNPEYLDAVNFFYSQHLLRLKEMPEPVKRTFEYIGKRRTYEIMNGPNEFTIIGTIKDWDVTEQLYKITVPTLITVGKYDEVTVNVAQLIHKNIKGSRLVIFENSSHMAMWEEKDKYLEVIKEFIDQVYSLNMVK</sequence>
<name>PIP_SACS2</name>
<evidence type="ECO:0000250" key="1"/>
<evidence type="ECO:0000255" key="2"/>
<evidence type="ECO:0000305" key="3"/>
<accession>Q97UA2</accession>
<gene>
    <name type="primary">pip</name>
    <name type="ordered locus">SSO3115</name>
</gene>
<feature type="chain" id="PRO_0000080850" description="Proline iminopeptidase">
    <location>
        <begin position="1"/>
        <end position="310"/>
    </location>
</feature>
<feature type="domain" description="AB hydrolase-1" evidence="2">
    <location>
        <begin position="41"/>
        <end position="288"/>
    </location>
</feature>
<feature type="active site" description="Nucleophile" evidence="1">
    <location>
        <position position="116"/>
    </location>
</feature>
<feature type="active site" evidence="1">
    <location>
        <position position="255"/>
    </location>
</feature>
<feature type="active site" description="Proton donor" evidence="1">
    <location>
        <position position="282"/>
    </location>
</feature>
<protein>
    <recommendedName>
        <fullName>Proline iminopeptidase</fullName>
        <shortName>PIP</shortName>
        <ecNumber>3.4.11.5</ecNumber>
    </recommendedName>
    <alternativeName>
        <fullName>Prolyl aminopeptidase</fullName>
        <shortName>PAP</shortName>
    </alternativeName>
    <alternativeName>
        <fullName>Tricorn protease-interacting factor F1</fullName>
    </alternativeName>
</protein>
<comment type="function">
    <text evidence="1">Cleaves H-Pro-AMC as well as a wide spectrum of amino acid substrates and several peptide substrates without a proline at the N-terminus. In conjunction with the three factors F1, F2 and F3, Tricorn degrades oligopeptides in a sequential manner, yielding free amino acids (By similarity).</text>
</comment>
<comment type="catalytic activity">
    <reaction>
        <text>Release of N-terminal proline from a peptide.</text>
        <dbReference type="EC" id="3.4.11.5"/>
    </reaction>
</comment>
<comment type="subunit">
    <text evidence="1">Part of the tricorn proteolytic complex.</text>
</comment>
<comment type="similarity">
    <text evidence="3">Belongs to the peptidase S33 family.</text>
</comment>
<organism>
    <name type="scientific">Saccharolobus solfataricus (strain ATCC 35092 / DSM 1617 / JCM 11322 / P2)</name>
    <name type="common">Sulfolobus solfataricus</name>
    <dbReference type="NCBI Taxonomy" id="273057"/>
    <lineage>
        <taxon>Archaea</taxon>
        <taxon>Thermoproteota</taxon>
        <taxon>Thermoprotei</taxon>
        <taxon>Sulfolobales</taxon>
        <taxon>Sulfolobaceae</taxon>
        <taxon>Saccharolobus</taxon>
    </lineage>
</organism>